<proteinExistence type="inferred from homology"/>
<comment type="function">
    <text evidence="1">One of the primary rRNA binding proteins, it binds specifically to the 5'-end of 16S ribosomal RNA.</text>
</comment>
<comment type="subunit">
    <text evidence="1">Part of the 30S ribosomal subunit.</text>
</comment>
<comment type="similarity">
    <text evidence="1">Belongs to the universal ribosomal protein uS17 family.</text>
</comment>
<sequence>MTDKIRTLQGRVVSDKMEKSIVVAIERFVKHPIYGKFIKRTTKLHVHDENNECGIGDVVEIRECRPLSKTKSWTLVRVVEKAVL</sequence>
<accession>B7LRS7</accession>
<dbReference type="EMBL" id="CU928158">
    <property type="protein sequence ID" value="CAQ90774.1"/>
    <property type="molecule type" value="Genomic_DNA"/>
</dbReference>
<dbReference type="RefSeq" id="WP_000130100.1">
    <property type="nucleotide sequence ID" value="NC_011740.1"/>
</dbReference>
<dbReference type="SMR" id="B7LRS7"/>
<dbReference type="GeneID" id="93778676"/>
<dbReference type="KEGG" id="efe:EFER_3294"/>
<dbReference type="HOGENOM" id="CLU_073626_1_1_6"/>
<dbReference type="OrthoDB" id="9811714at2"/>
<dbReference type="Proteomes" id="UP000000745">
    <property type="component" value="Chromosome"/>
</dbReference>
<dbReference type="GO" id="GO:0022627">
    <property type="term" value="C:cytosolic small ribosomal subunit"/>
    <property type="evidence" value="ECO:0007669"/>
    <property type="project" value="TreeGrafter"/>
</dbReference>
<dbReference type="GO" id="GO:0019843">
    <property type="term" value="F:rRNA binding"/>
    <property type="evidence" value="ECO:0007669"/>
    <property type="project" value="UniProtKB-UniRule"/>
</dbReference>
<dbReference type="GO" id="GO:0003735">
    <property type="term" value="F:structural constituent of ribosome"/>
    <property type="evidence" value="ECO:0007669"/>
    <property type="project" value="InterPro"/>
</dbReference>
<dbReference type="GO" id="GO:0006412">
    <property type="term" value="P:translation"/>
    <property type="evidence" value="ECO:0007669"/>
    <property type="project" value="UniProtKB-UniRule"/>
</dbReference>
<dbReference type="CDD" id="cd00364">
    <property type="entry name" value="Ribosomal_uS17"/>
    <property type="match status" value="1"/>
</dbReference>
<dbReference type="FunFam" id="2.40.50.140:FF:000014">
    <property type="entry name" value="30S ribosomal protein S17"/>
    <property type="match status" value="1"/>
</dbReference>
<dbReference type="Gene3D" id="2.40.50.140">
    <property type="entry name" value="Nucleic acid-binding proteins"/>
    <property type="match status" value="1"/>
</dbReference>
<dbReference type="HAMAP" id="MF_01345_B">
    <property type="entry name" value="Ribosomal_uS17_B"/>
    <property type="match status" value="1"/>
</dbReference>
<dbReference type="InterPro" id="IPR012340">
    <property type="entry name" value="NA-bd_OB-fold"/>
</dbReference>
<dbReference type="InterPro" id="IPR000266">
    <property type="entry name" value="Ribosomal_uS17"/>
</dbReference>
<dbReference type="InterPro" id="IPR019984">
    <property type="entry name" value="Ribosomal_uS17_bact/chlr"/>
</dbReference>
<dbReference type="InterPro" id="IPR019979">
    <property type="entry name" value="Ribosomal_uS17_CS"/>
</dbReference>
<dbReference type="NCBIfam" id="NF004123">
    <property type="entry name" value="PRK05610.1"/>
    <property type="match status" value="1"/>
</dbReference>
<dbReference type="NCBIfam" id="TIGR03635">
    <property type="entry name" value="uS17_bact"/>
    <property type="match status" value="1"/>
</dbReference>
<dbReference type="PANTHER" id="PTHR10744">
    <property type="entry name" value="40S RIBOSOMAL PROTEIN S11 FAMILY MEMBER"/>
    <property type="match status" value="1"/>
</dbReference>
<dbReference type="PANTHER" id="PTHR10744:SF1">
    <property type="entry name" value="SMALL RIBOSOMAL SUBUNIT PROTEIN US17M"/>
    <property type="match status" value="1"/>
</dbReference>
<dbReference type="Pfam" id="PF00366">
    <property type="entry name" value="Ribosomal_S17"/>
    <property type="match status" value="1"/>
</dbReference>
<dbReference type="PRINTS" id="PR00973">
    <property type="entry name" value="RIBOSOMALS17"/>
</dbReference>
<dbReference type="SUPFAM" id="SSF50249">
    <property type="entry name" value="Nucleic acid-binding proteins"/>
    <property type="match status" value="1"/>
</dbReference>
<dbReference type="PROSITE" id="PS00056">
    <property type="entry name" value="RIBOSOMAL_S17"/>
    <property type="match status" value="1"/>
</dbReference>
<keyword id="KW-0687">Ribonucleoprotein</keyword>
<keyword id="KW-0689">Ribosomal protein</keyword>
<keyword id="KW-0694">RNA-binding</keyword>
<keyword id="KW-0699">rRNA-binding</keyword>
<name>RS17_ESCF3</name>
<evidence type="ECO:0000255" key="1">
    <source>
        <dbReference type="HAMAP-Rule" id="MF_01345"/>
    </source>
</evidence>
<evidence type="ECO:0000305" key="2"/>
<protein>
    <recommendedName>
        <fullName evidence="1">Small ribosomal subunit protein uS17</fullName>
    </recommendedName>
    <alternativeName>
        <fullName evidence="2">30S ribosomal protein S17</fullName>
    </alternativeName>
</protein>
<feature type="chain" id="PRO_1000143258" description="Small ribosomal subunit protein uS17">
    <location>
        <begin position="1"/>
        <end position="84"/>
    </location>
</feature>
<gene>
    <name evidence="1" type="primary">rpsQ</name>
    <name type="ordered locus">EFER_3294</name>
</gene>
<reference key="1">
    <citation type="journal article" date="2009" name="PLoS Genet.">
        <title>Organised genome dynamics in the Escherichia coli species results in highly diverse adaptive paths.</title>
        <authorList>
            <person name="Touchon M."/>
            <person name="Hoede C."/>
            <person name="Tenaillon O."/>
            <person name="Barbe V."/>
            <person name="Baeriswyl S."/>
            <person name="Bidet P."/>
            <person name="Bingen E."/>
            <person name="Bonacorsi S."/>
            <person name="Bouchier C."/>
            <person name="Bouvet O."/>
            <person name="Calteau A."/>
            <person name="Chiapello H."/>
            <person name="Clermont O."/>
            <person name="Cruveiller S."/>
            <person name="Danchin A."/>
            <person name="Diard M."/>
            <person name="Dossat C."/>
            <person name="Karoui M.E."/>
            <person name="Frapy E."/>
            <person name="Garry L."/>
            <person name="Ghigo J.M."/>
            <person name="Gilles A.M."/>
            <person name="Johnson J."/>
            <person name="Le Bouguenec C."/>
            <person name="Lescat M."/>
            <person name="Mangenot S."/>
            <person name="Martinez-Jehanne V."/>
            <person name="Matic I."/>
            <person name="Nassif X."/>
            <person name="Oztas S."/>
            <person name="Petit M.A."/>
            <person name="Pichon C."/>
            <person name="Rouy Z."/>
            <person name="Ruf C.S."/>
            <person name="Schneider D."/>
            <person name="Tourret J."/>
            <person name="Vacherie B."/>
            <person name="Vallenet D."/>
            <person name="Medigue C."/>
            <person name="Rocha E.P.C."/>
            <person name="Denamur E."/>
        </authorList>
    </citation>
    <scope>NUCLEOTIDE SEQUENCE [LARGE SCALE GENOMIC DNA]</scope>
    <source>
        <strain>ATCC 35469 / DSM 13698 / BCRC 15582 / CCUG 18766 / IAM 14443 / JCM 21226 / LMG 7866 / NBRC 102419 / NCTC 12128 / CDC 0568-73</strain>
    </source>
</reference>
<organism>
    <name type="scientific">Escherichia fergusonii (strain ATCC 35469 / DSM 13698 / CCUG 18766 / IAM 14443 / JCM 21226 / LMG 7866 / NBRC 102419 / NCTC 12128 / CDC 0568-73)</name>
    <dbReference type="NCBI Taxonomy" id="585054"/>
    <lineage>
        <taxon>Bacteria</taxon>
        <taxon>Pseudomonadati</taxon>
        <taxon>Pseudomonadota</taxon>
        <taxon>Gammaproteobacteria</taxon>
        <taxon>Enterobacterales</taxon>
        <taxon>Enterobacteriaceae</taxon>
        <taxon>Escherichia</taxon>
    </lineage>
</organism>